<name>DHKC_DICDI</name>
<accession>Q95PI2</accession>
<accession>O15784</accession>
<accession>Q554Q0</accession>
<organism>
    <name type="scientific">Dictyostelium discoideum</name>
    <name type="common">Social amoeba</name>
    <dbReference type="NCBI Taxonomy" id="44689"/>
    <lineage>
        <taxon>Eukaryota</taxon>
        <taxon>Amoebozoa</taxon>
        <taxon>Evosea</taxon>
        <taxon>Eumycetozoa</taxon>
        <taxon>Dictyostelia</taxon>
        <taxon>Dictyosteliales</taxon>
        <taxon>Dictyosteliaceae</taxon>
        <taxon>Dictyostelium</taxon>
    </lineage>
</organism>
<evidence type="ECO:0000255" key="1"/>
<evidence type="ECO:0000255" key="2">
    <source>
        <dbReference type="PROSITE-ProRule" id="PRU00107"/>
    </source>
</evidence>
<evidence type="ECO:0000255" key="3">
    <source>
        <dbReference type="PROSITE-ProRule" id="PRU00169"/>
    </source>
</evidence>
<evidence type="ECO:0000256" key="4">
    <source>
        <dbReference type="SAM" id="MobiDB-lite"/>
    </source>
</evidence>
<evidence type="ECO:0000269" key="5">
    <source>
    </source>
</evidence>
<evidence type="ECO:0000269" key="6">
    <source>
    </source>
</evidence>
<evidence type="ECO:0000305" key="7"/>
<keyword id="KW-0067">ATP-binding</keyword>
<keyword id="KW-0418">Kinase</keyword>
<keyword id="KW-0472">Membrane</keyword>
<keyword id="KW-0547">Nucleotide-binding</keyword>
<keyword id="KW-0597">Phosphoprotein</keyword>
<keyword id="KW-0675">Receptor</keyword>
<keyword id="KW-1185">Reference proteome</keyword>
<keyword id="KW-0677">Repeat</keyword>
<keyword id="KW-0807">Transducer</keyword>
<keyword id="KW-0808">Transferase</keyword>
<keyword id="KW-0812">Transmembrane</keyword>
<keyword id="KW-1133">Transmembrane helix</keyword>
<keyword id="KW-0902">Two-component regulatory system</keyword>
<reference key="1">
    <citation type="journal article" date="1998" name="Dev. Biol.">
        <title>The histidine kinase dhkC regulates the choice between migrating slugs and terminal differentiation in Dictyostelium discoideum.</title>
        <authorList>
            <person name="Singleton C.K."/>
            <person name="Zinda M.J."/>
            <person name="Mykytka B."/>
            <person name="Yang P."/>
        </authorList>
    </citation>
    <scope>NUCLEOTIDE SEQUENCE [MRNA]</scope>
    <scope>CHARACTERIZATION</scope>
</reference>
<reference key="2">
    <citation type="book" date="2001" name="HISTIDINE KINASES IN SIGNAL TRASNDUCTION">
        <title>The histidine kinases of Dictyostelium.</title>
        <editorList>
            <person name="Inouye M."/>
            <person name="Dutta R."/>
        </editorList>
        <authorList>
            <person name="Anjard C."/>
            <person name="Loomis W.F."/>
        </authorList>
    </citation>
    <scope>NUCLEOTIDE SEQUENCE [GENOMIC DNA]</scope>
    <source>
        <strain>AX4</strain>
    </source>
</reference>
<reference key="3">
    <citation type="journal article" date="2002" name="Nature">
        <title>Sequence and analysis of chromosome 2 of Dictyostelium discoideum.</title>
        <authorList>
            <person name="Gloeckner G."/>
            <person name="Eichinger L."/>
            <person name="Szafranski K."/>
            <person name="Pachebat J.A."/>
            <person name="Bankier A.T."/>
            <person name="Dear P.H."/>
            <person name="Lehmann R."/>
            <person name="Baumgart C."/>
            <person name="Parra G."/>
            <person name="Abril J.F."/>
            <person name="Guigo R."/>
            <person name="Kumpf K."/>
            <person name="Tunggal B."/>
            <person name="Cox E.C."/>
            <person name="Quail M.A."/>
            <person name="Platzer M."/>
            <person name="Rosenthal A."/>
            <person name="Noegel A.A."/>
        </authorList>
    </citation>
    <scope>NUCLEOTIDE SEQUENCE [LARGE SCALE GENOMIC DNA]</scope>
    <source>
        <strain>AX4</strain>
    </source>
</reference>
<reference key="4">
    <citation type="journal article" date="2005" name="Nature">
        <title>The genome of the social amoeba Dictyostelium discoideum.</title>
        <authorList>
            <person name="Eichinger L."/>
            <person name="Pachebat J.A."/>
            <person name="Gloeckner G."/>
            <person name="Rajandream M.A."/>
            <person name="Sucgang R."/>
            <person name="Berriman M."/>
            <person name="Song J."/>
            <person name="Olsen R."/>
            <person name="Szafranski K."/>
            <person name="Xu Q."/>
            <person name="Tunggal B."/>
            <person name="Kummerfeld S."/>
            <person name="Madera M."/>
            <person name="Konfortov B.A."/>
            <person name="Rivero F."/>
            <person name="Bankier A.T."/>
            <person name="Lehmann R."/>
            <person name="Hamlin N."/>
            <person name="Davies R."/>
            <person name="Gaudet P."/>
            <person name="Fey P."/>
            <person name="Pilcher K."/>
            <person name="Chen G."/>
            <person name="Saunders D."/>
            <person name="Sodergren E.J."/>
            <person name="Davis P."/>
            <person name="Kerhornou A."/>
            <person name="Nie X."/>
            <person name="Hall N."/>
            <person name="Anjard C."/>
            <person name="Hemphill L."/>
            <person name="Bason N."/>
            <person name="Farbrother P."/>
            <person name="Desany B."/>
            <person name="Just E."/>
            <person name="Morio T."/>
            <person name="Rost R."/>
            <person name="Churcher C.M."/>
            <person name="Cooper J."/>
            <person name="Haydock S."/>
            <person name="van Driessche N."/>
            <person name="Cronin A."/>
            <person name="Goodhead I."/>
            <person name="Muzny D.M."/>
            <person name="Mourier T."/>
            <person name="Pain A."/>
            <person name="Lu M."/>
            <person name="Harper D."/>
            <person name="Lindsay R."/>
            <person name="Hauser H."/>
            <person name="James K.D."/>
            <person name="Quiles M."/>
            <person name="Madan Babu M."/>
            <person name="Saito T."/>
            <person name="Buchrieser C."/>
            <person name="Wardroper A."/>
            <person name="Felder M."/>
            <person name="Thangavelu M."/>
            <person name="Johnson D."/>
            <person name="Knights A."/>
            <person name="Loulseged H."/>
            <person name="Mungall K.L."/>
            <person name="Oliver K."/>
            <person name="Price C."/>
            <person name="Quail M.A."/>
            <person name="Urushihara H."/>
            <person name="Hernandez J."/>
            <person name="Rabbinowitsch E."/>
            <person name="Steffen D."/>
            <person name="Sanders M."/>
            <person name="Ma J."/>
            <person name="Kohara Y."/>
            <person name="Sharp S."/>
            <person name="Simmonds M.N."/>
            <person name="Spiegler S."/>
            <person name="Tivey A."/>
            <person name="Sugano S."/>
            <person name="White B."/>
            <person name="Walker D."/>
            <person name="Woodward J.R."/>
            <person name="Winckler T."/>
            <person name="Tanaka Y."/>
            <person name="Shaulsky G."/>
            <person name="Schleicher M."/>
            <person name="Weinstock G.M."/>
            <person name="Rosenthal A."/>
            <person name="Cox E.C."/>
            <person name="Chisholm R.L."/>
            <person name="Gibbs R.A."/>
            <person name="Loomis W.F."/>
            <person name="Platzer M."/>
            <person name="Kay R.R."/>
            <person name="Williams J.G."/>
            <person name="Dear P.H."/>
            <person name="Noegel A.A."/>
            <person name="Barrell B.G."/>
            <person name="Kuspa A."/>
        </authorList>
    </citation>
    <scope>NUCLEOTIDE SEQUENCE [LARGE SCALE GENOMIC DNA]</scope>
    <source>
        <strain>AX4</strain>
    </source>
</reference>
<reference key="5">
    <citation type="journal article" date="2005" name="Dev. Biol.">
        <title>Ammonium transporter C of Dictyostelium discoideum is required for correct prestalk gene expression and for regulating the choice between slug migration and culmination.</title>
        <authorList>
            <person name="Kirsten J.H."/>
            <person name="Xiong Y."/>
            <person name="Dunbar A.J."/>
            <person name="Rai M."/>
            <person name="Singleton C.K."/>
        </authorList>
    </citation>
    <scope>FUNCTION</scope>
    <scope>MUTAGENESIS</scope>
    <scope>DEVELOPMENTAL STAGE</scope>
    <scope>PHOSPHORELAY INHIBITION BY AMTC</scope>
</reference>
<reference key="6">
    <citation type="journal article" date="2006" name="Eukaryot. Cell">
        <title>Function of ammonium transporter A in the initiation of culmination of development in Dictyostelium discoideum.</title>
        <authorList>
            <person name="Singleton C.K."/>
            <person name="Kirsten J.H."/>
            <person name="Dinsmore C.J."/>
        </authorList>
    </citation>
    <scope>FUNCTION</scope>
    <scope>PHOSPHORELAY ACTIVATION BY AMTA</scope>
</reference>
<sequence>MIVEVELGFLLSTLFFTIISIILFYFFINNKNNLIDQCQEVTKLNNKDNKIVNNNNNNYNNNNFNKIEEINDDKNKEIIKLINNSNNKNLKIKIQEIDSGNNNNNNNNNNNNNNNNLNKNSNEIFRNFKIFSGSLLVIDQDLNIISSSESVRDIFSNINDINGVNQQVIGSLQNYSFINLVHQKDKDRVSTFLKLKFKNNNNIKHQQFSEDIINEKDELKEIQIEDNKELIIINNNNNNNNDNVLKFGNNNSNNSSIILFQGVYHLNNTDLSKPFNLQVSILPFISENYIVLSLKDLSPPPLRLLLNKTSSALSPRSLSSSSSSSPSSSNNNGNTNNSGSLSPRSSNSNGSAVSPRNVSSNSMSPRGQNSDRSISSPRGSSSSSSSSSNELAISPRNSNGTISSPRTSNLSIESVLNNKSIDMISHLSHELRTPIHSVIASIQLFRSTILTVTQNEYLSIIDTSANTLLELVSNVLDYKRIRSGKLTLNNVDFNLCHVIEDVCAMVSPQAQAKSLQIASFIFIHCPLSFYGDPIRLRQVLLNLIGNGLKYTNKGQVCISVEPEQVNEHCMYLHFQVKDSGIGIKEENMSKLFAGFSQVNNGGTTQEALGSGLGLAISKDLVELMGGKIWCSSNATQNNGEAGCTFHFVIPLETNPKQLPCPIQNFNGLSVLVVDKNPYIQTVLCQYLEGWNCQVIKSSDIKEASNKLKDLRREQIEVVMIDIDNIDFRDFIQFKDAFNRLEFGRIGLITMSSDRSMVNEMGFGTSKLTKPFRQSHLVACLLASMPEHSSSTTNCFSNIVGMNSNINNNNNINNNSNNNNNNMQTHNSNSVYGNGNYGNCTPFSNNNNRIHMMSSGDKPSINNRRMSISLGKIPTFNSGGSNSPRSKKLFEEVLQQQQLQQQLQQQLQQQQQLQQQQQQQQQQQQQQQQQLQQQQQQLNTIDDDSNNYCNTTGTMDSIDEINKNNYSDSESDELNDDQAPIIAPVQQLSFGRVTRRHSIDIIMFENSRELSELRNLEDSTRYLSPRSMNNNNGNNDNGINGGSGNSLFGSSIKEEIGGTSDTSSLAQSPNSLSPRAPTKIMILDDNPVSLKLMQRILESRGFECYPFDCSEKAVAQLDQVNPAIIFMDCEMPKMNGFECTQLIRKREQESLCLLKDRKIIIALTAHINPEIQVKCFDAGMNDFISKPFKPQCLELILRKWEDCISNNQLNYNNSLINNQTTIQEQV</sequence>
<gene>
    <name type="primary">dhkC</name>
    <name type="ORF">DDB_G0274191</name>
</gene>
<comment type="function">
    <text evidence="5 6">Acts in a signal transduction pathway that regulates the slug versus culmination choice. Believed to be the first component of a phosphorelay that couples the sensing of ammonia to the modulation of PKA activity and hence activates culmination and spore germination. Ammonium transporters amtA and amtC are thought to respectively activate and inhibit dhkC phosphorelay. This protein probably undergoes an ATP-dependent autophosphorylation at conserved His residue in the kinase core, and a phosphoryl group is then transferred to a conserved aspartate residue in the receiver domain.</text>
</comment>
<comment type="catalytic activity">
    <reaction>
        <text>ATP + protein L-histidine = ADP + protein N-phospho-L-histidine.</text>
        <dbReference type="EC" id="2.7.13.3"/>
    </reaction>
</comment>
<comment type="subcellular location">
    <subcellularLocation>
        <location evidence="7">Membrane</location>
        <topology evidence="7">Single-pass membrane protein</topology>
    </subcellularLocation>
</comment>
<comment type="developmental stage">
    <text evidence="5">Expressed at low levels during growth and development, with a peak during early aggregation (8 h). Mounds display weak expression within the upper regions and very strong expression at the perimeter of basal cells in contact with the substrate. Expression becomes tip-specific during first finger formation.</text>
</comment>
<comment type="sequence caution" evidence="7">
    <conflict type="frameshift">
        <sequence resource="EMBL-CDS" id="AAB84206"/>
    </conflict>
</comment>
<dbReference type="EC" id="2.7.13.3"/>
<dbReference type="EMBL" id="AF029726">
    <property type="protein sequence ID" value="AAB84206.1"/>
    <property type="status" value="ALT_FRAME"/>
    <property type="molecule type" value="mRNA"/>
</dbReference>
<dbReference type="EMBL" id="AF361474">
    <property type="protein sequence ID" value="AAK50004.1"/>
    <property type="molecule type" value="Genomic_DNA"/>
</dbReference>
<dbReference type="EMBL" id="AAFI02000012">
    <property type="protein sequence ID" value="EAL69988.1"/>
    <property type="molecule type" value="Genomic_DNA"/>
</dbReference>
<dbReference type="PIR" id="T09057">
    <property type="entry name" value="T09057"/>
</dbReference>
<dbReference type="RefSeq" id="XP_644273.1">
    <property type="nucleotide sequence ID" value="XM_639181.1"/>
</dbReference>
<dbReference type="SMR" id="Q95PI2"/>
<dbReference type="STRING" id="44689.Q95PI2"/>
<dbReference type="PaxDb" id="44689-DDB0185038"/>
<dbReference type="EnsemblProtists" id="EAL69988">
    <property type="protein sequence ID" value="EAL69988"/>
    <property type="gene ID" value="DDB_G0274191"/>
</dbReference>
<dbReference type="GeneID" id="8619701"/>
<dbReference type="KEGG" id="ddi:DDB_G0274191"/>
<dbReference type="dictyBase" id="DDB_G0274191">
    <property type="gene designation" value="dhkC"/>
</dbReference>
<dbReference type="VEuPathDB" id="AmoebaDB:DDB_G0274191"/>
<dbReference type="eggNOG" id="KOG0519">
    <property type="taxonomic scope" value="Eukaryota"/>
</dbReference>
<dbReference type="HOGENOM" id="CLU_268268_0_0_1"/>
<dbReference type="InParanoid" id="Q95PI2"/>
<dbReference type="OMA" id="MGGKIWC"/>
<dbReference type="PRO" id="PR:Q95PI2"/>
<dbReference type="Proteomes" id="UP000002195">
    <property type="component" value="Chromosome 2"/>
</dbReference>
<dbReference type="GO" id="GO:0016020">
    <property type="term" value="C:membrane"/>
    <property type="evidence" value="ECO:0007669"/>
    <property type="project" value="UniProtKB-SubCell"/>
</dbReference>
<dbReference type="GO" id="GO:0005524">
    <property type="term" value="F:ATP binding"/>
    <property type="evidence" value="ECO:0007669"/>
    <property type="project" value="UniProtKB-KW"/>
</dbReference>
<dbReference type="GO" id="GO:0000155">
    <property type="term" value="F:phosphorelay sensor kinase activity"/>
    <property type="evidence" value="ECO:0000318"/>
    <property type="project" value="GO_Central"/>
</dbReference>
<dbReference type="GO" id="GO:0061128">
    <property type="term" value="P:positive regulation of chemotaxis to cAMP by DIF-2"/>
    <property type="evidence" value="ECO:0000315"/>
    <property type="project" value="dictyBase"/>
</dbReference>
<dbReference type="GO" id="GO:0060359">
    <property type="term" value="P:response to ammonium ion"/>
    <property type="evidence" value="ECO:0000315"/>
    <property type="project" value="dictyBase"/>
</dbReference>
<dbReference type="GO" id="GO:1903831">
    <property type="term" value="P:signal transduction involved in cellular response to ammonium ion"/>
    <property type="evidence" value="ECO:0000316"/>
    <property type="project" value="dictyBase"/>
</dbReference>
<dbReference type="GO" id="GO:0030587">
    <property type="term" value="P:sorocarp development"/>
    <property type="evidence" value="ECO:0000315"/>
    <property type="project" value="dictyBase"/>
</dbReference>
<dbReference type="GO" id="GO:0009847">
    <property type="term" value="P:spore germination"/>
    <property type="evidence" value="ECO:0000315"/>
    <property type="project" value="dictyBase"/>
</dbReference>
<dbReference type="CDD" id="cd16922">
    <property type="entry name" value="HATPase_EvgS-ArcB-TorS-like"/>
    <property type="match status" value="1"/>
</dbReference>
<dbReference type="CDD" id="cd00082">
    <property type="entry name" value="HisKA"/>
    <property type="match status" value="1"/>
</dbReference>
<dbReference type="CDD" id="cd17546">
    <property type="entry name" value="REC_hyHK_CKI1_RcsC-like"/>
    <property type="match status" value="1"/>
</dbReference>
<dbReference type="FunFam" id="3.40.50.2300:FF:000918">
    <property type="match status" value="1"/>
</dbReference>
<dbReference type="FunFam" id="3.40.50.2300:FF:000620">
    <property type="entry name" value="Hybrid sensor histidine kinase/response regulator"/>
    <property type="match status" value="1"/>
</dbReference>
<dbReference type="FunFam" id="3.30.565.10:FF:000010">
    <property type="entry name" value="Sensor histidine kinase RcsC"/>
    <property type="match status" value="1"/>
</dbReference>
<dbReference type="Gene3D" id="1.10.287.130">
    <property type="match status" value="1"/>
</dbReference>
<dbReference type="Gene3D" id="3.40.50.2300">
    <property type="match status" value="2"/>
</dbReference>
<dbReference type="Gene3D" id="3.30.565.10">
    <property type="entry name" value="Histidine kinase-like ATPase, C-terminal domain"/>
    <property type="match status" value="1"/>
</dbReference>
<dbReference type="InterPro" id="IPR011006">
    <property type="entry name" value="CheY-like_superfamily"/>
</dbReference>
<dbReference type="InterPro" id="IPR036890">
    <property type="entry name" value="HATPase_C_sf"/>
</dbReference>
<dbReference type="InterPro" id="IPR005467">
    <property type="entry name" value="His_kinase_dom"/>
</dbReference>
<dbReference type="InterPro" id="IPR003661">
    <property type="entry name" value="HisK_dim/P_dom"/>
</dbReference>
<dbReference type="InterPro" id="IPR036097">
    <property type="entry name" value="HisK_dim/P_sf"/>
</dbReference>
<dbReference type="InterPro" id="IPR004358">
    <property type="entry name" value="Sig_transdc_His_kin-like_C"/>
</dbReference>
<dbReference type="InterPro" id="IPR001789">
    <property type="entry name" value="Sig_transdc_resp-reg_receiver"/>
</dbReference>
<dbReference type="PANTHER" id="PTHR43547:SF2">
    <property type="entry name" value="HYBRID SIGNAL TRANSDUCTION HISTIDINE KINASE C"/>
    <property type="match status" value="1"/>
</dbReference>
<dbReference type="PANTHER" id="PTHR43547">
    <property type="entry name" value="TWO-COMPONENT HISTIDINE KINASE"/>
    <property type="match status" value="1"/>
</dbReference>
<dbReference type="Pfam" id="PF02518">
    <property type="entry name" value="HATPase_c"/>
    <property type="match status" value="1"/>
</dbReference>
<dbReference type="Pfam" id="PF00512">
    <property type="entry name" value="HisKA"/>
    <property type="match status" value="1"/>
</dbReference>
<dbReference type="Pfam" id="PF00072">
    <property type="entry name" value="Response_reg"/>
    <property type="match status" value="1"/>
</dbReference>
<dbReference type="PRINTS" id="PR00344">
    <property type="entry name" value="BCTRLSENSOR"/>
</dbReference>
<dbReference type="SMART" id="SM00387">
    <property type="entry name" value="HATPase_c"/>
    <property type="match status" value="1"/>
</dbReference>
<dbReference type="SMART" id="SM00388">
    <property type="entry name" value="HisKA"/>
    <property type="match status" value="1"/>
</dbReference>
<dbReference type="SMART" id="SM00448">
    <property type="entry name" value="REC"/>
    <property type="match status" value="1"/>
</dbReference>
<dbReference type="SUPFAM" id="SSF55874">
    <property type="entry name" value="ATPase domain of HSP90 chaperone/DNA topoisomerase II/histidine kinase"/>
    <property type="match status" value="1"/>
</dbReference>
<dbReference type="SUPFAM" id="SSF81995">
    <property type="entry name" value="beta-sandwich domain of Sec23/24"/>
    <property type="match status" value="1"/>
</dbReference>
<dbReference type="SUPFAM" id="SSF52172">
    <property type="entry name" value="CheY-like"/>
    <property type="match status" value="2"/>
</dbReference>
<dbReference type="SUPFAM" id="SSF47384">
    <property type="entry name" value="Homodimeric domain of signal transducing histidine kinase"/>
    <property type="match status" value="1"/>
</dbReference>
<dbReference type="PROSITE" id="PS50109">
    <property type="entry name" value="HIS_KIN"/>
    <property type="match status" value="1"/>
</dbReference>
<dbReference type="PROSITE" id="PS50110">
    <property type="entry name" value="RESPONSE_REGULATORY"/>
    <property type="match status" value="2"/>
</dbReference>
<proteinExistence type="evidence at protein level"/>
<protein>
    <recommendedName>
        <fullName>Hybrid signal transduction histidine kinase C</fullName>
        <ecNumber>2.7.13.3</ecNumber>
    </recommendedName>
</protein>
<feature type="chain" id="PRO_0000328269" description="Hybrid signal transduction histidine kinase C">
    <location>
        <begin position="1"/>
        <end position="1225"/>
    </location>
</feature>
<feature type="transmembrane region" description="Helical" evidence="1">
    <location>
        <begin position="8"/>
        <end position="28"/>
    </location>
</feature>
<feature type="domain" description="Histidine kinase" evidence="2">
    <location>
        <begin position="426"/>
        <end position="653"/>
    </location>
</feature>
<feature type="domain" description="Response regulatory 1" evidence="3">
    <location>
        <begin position="669"/>
        <end position="784"/>
    </location>
</feature>
<feature type="domain" description="Response regulatory 2" evidence="3">
    <location>
        <begin position="1078"/>
        <end position="1200"/>
    </location>
</feature>
<feature type="region of interest" description="Disordered" evidence="4">
    <location>
        <begin position="313"/>
        <end position="407"/>
    </location>
</feature>
<feature type="region of interest" description="Disordered" evidence="4">
    <location>
        <begin position="809"/>
        <end position="832"/>
    </location>
</feature>
<feature type="region of interest" description="Disordered" evidence="4">
    <location>
        <begin position="941"/>
        <end position="974"/>
    </location>
</feature>
<feature type="region of interest" description="Disordered" evidence="4">
    <location>
        <begin position="1021"/>
        <end position="1076"/>
    </location>
</feature>
<feature type="compositionally biased region" description="Low complexity" evidence="4">
    <location>
        <begin position="313"/>
        <end position="356"/>
    </location>
</feature>
<feature type="compositionally biased region" description="Polar residues" evidence="4">
    <location>
        <begin position="357"/>
        <end position="368"/>
    </location>
</feature>
<feature type="compositionally biased region" description="Low complexity" evidence="4">
    <location>
        <begin position="370"/>
        <end position="388"/>
    </location>
</feature>
<feature type="compositionally biased region" description="Polar residues" evidence="4">
    <location>
        <begin position="389"/>
        <end position="407"/>
    </location>
</feature>
<feature type="compositionally biased region" description="Polar residues" evidence="4">
    <location>
        <begin position="945"/>
        <end position="954"/>
    </location>
</feature>
<feature type="compositionally biased region" description="Low complexity" evidence="4">
    <location>
        <begin position="1023"/>
        <end position="1037"/>
    </location>
</feature>
<feature type="compositionally biased region" description="Polar residues" evidence="4">
    <location>
        <begin position="1058"/>
        <end position="1072"/>
    </location>
</feature>
<feature type="modified residue" description="Phosphohistidine; by autocatalysis" evidence="2">
    <location>
        <position position="429"/>
    </location>
</feature>
<feature type="modified residue" description="4-aspartylphosphate" evidence="3">
    <location>
        <position position="721"/>
    </location>
</feature>
<feature type="modified residue" description="4-aspartylphosphate" evidence="3">
    <location>
        <position position="1127"/>
    </location>
</feature>